<evidence type="ECO:0000255" key="1">
    <source>
        <dbReference type="HAMAP-Rule" id="MF_01026"/>
    </source>
</evidence>
<proteinExistence type="inferred from homology"/>
<protein>
    <recommendedName>
        <fullName evidence="1">3-isopropylmalate dehydratase large subunit</fullName>
        <ecNumber evidence="1">4.2.1.33</ecNumber>
    </recommendedName>
    <alternativeName>
        <fullName evidence="1">Alpha-IPM isomerase</fullName>
        <shortName evidence="1">IPMI</shortName>
    </alternativeName>
    <alternativeName>
        <fullName evidence="1">Isopropylmalate isomerase</fullName>
    </alternativeName>
</protein>
<keyword id="KW-0004">4Fe-4S</keyword>
<keyword id="KW-0028">Amino-acid biosynthesis</keyword>
<keyword id="KW-0100">Branched-chain amino acid biosynthesis</keyword>
<keyword id="KW-0408">Iron</keyword>
<keyword id="KW-0411">Iron-sulfur</keyword>
<keyword id="KW-0432">Leucine biosynthesis</keyword>
<keyword id="KW-0456">Lyase</keyword>
<keyword id="KW-0479">Metal-binding</keyword>
<organism>
    <name type="scientific">Escherichia coli O7:K1 (strain IAI39 / ExPEC)</name>
    <dbReference type="NCBI Taxonomy" id="585057"/>
    <lineage>
        <taxon>Bacteria</taxon>
        <taxon>Pseudomonadati</taxon>
        <taxon>Pseudomonadota</taxon>
        <taxon>Gammaproteobacteria</taxon>
        <taxon>Enterobacterales</taxon>
        <taxon>Enterobacteriaceae</taxon>
        <taxon>Escherichia</taxon>
    </lineage>
</organism>
<accession>B7NHI0</accession>
<feature type="chain" id="PRO_1000135681" description="3-isopropylmalate dehydratase large subunit">
    <location>
        <begin position="1"/>
        <end position="466"/>
    </location>
</feature>
<feature type="binding site" evidence="1">
    <location>
        <position position="347"/>
    </location>
    <ligand>
        <name>[4Fe-4S] cluster</name>
        <dbReference type="ChEBI" id="CHEBI:49883"/>
    </ligand>
</feature>
<feature type="binding site" evidence="1">
    <location>
        <position position="407"/>
    </location>
    <ligand>
        <name>[4Fe-4S] cluster</name>
        <dbReference type="ChEBI" id="CHEBI:49883"/>
    </ligand>
</feature>
<feature type="binding site" evidence="1">
    <location>
        <position position="410"/>
    </location>
    <ligand>
        <name>[4Fe-4S] cluster</name>
        <dbReference type="ChEBI" id="CHEBI:49883"/>
    </ligand>
</feature>
<name>LEUC_ECO7I</name>
<comment type="function">
    <text evidence="1">Catalyzes the isomerization between 2-isopropylmalate and 3-isopropylmalate, via the formation of 2-isopropylmaleate.</text>
</comment>
<comment type="catalytic activity">
    <reaction evidence="1">
        <text>(2R,3S)-3-isopropylmalate = (2S)-2-isopropylmalate</text>
        <dbReference type="Rhea" id="RHEA:32287"/>
        <dbReference type="ChEBI" id="CHEBI:1178"/>
        <dbReference type="ChEBI" id="CHEBI:35121"/>
        <dbReference type="EC" id="4.2.1.33"/>
    </reaction>
</comment>
<comment type="cofactor">
    <cofactor evidence="1">
        <name>[4Fe-4S] cluster</name>
        <dbReference type="ChEBI" id="CHEBI:49883"/>
    </cofactor>
    <text evidence="1">Binds 1 [4Fe-4S] cluster per subunit.</text>
</comment>
<comment type="pathway">
    <text evidence="1">Amino-acid biosynthesis; L-leucine biosynthesis; L-leucine from 3-methyl-2-oxobutanoate: step 2/4.</text>
</comment>
<comment type="subunit">
    <text evidence="1">Heterodimer of LeuC and LeuD.</text>
</comment>
<comment type="similarity">
    <text evidence="1">Belongs to the aconitase/IPM isomerase family. LeuC type 1 subfamily.</text>
</comment>
<sequence length="466" mass="49882">MAKTLYEKLFDAHVVYEAENETPLLYIDRHLVHEVTSPQAFDGLRAHGRPVRQPGKTFATMDHNVSTQTKDINACGEMARIQMQELIKNCKEFGVELYDLNHPYQGIVHVMGPEQGVTLPGMTIVCGDSHTATHGAFGALAFGIGTSEVEHVLATQTLKQGRAKTMKIEVQGKAAPGITAKDIVLAIIGKTGSAGGTGHVVEFCGEAIRDLSMEGRMTLCNMAIEMGAKAGLVAPDETTFNYVKGRLHAPKGKDFDDAVAYWKTLQTDEGATFDTVVTLQAEEISPQVTWGTNPGQVISVNDNIPDPASFADPVERASAEKALAYMGLKPGIPLTEVAIDKVFIGSCTNSRIEDLRAAAEIAKGRKVAPGVQALVVPGSGPVKAQAEAEGLDKIFIEAGFEWRLPGCSMCLAMNNDRLNPGERCASTSNRNFEGRQGRGGRTHLVSPAMAAAAAVTGHFADIRNIK</sequence>
<dbReference type="EC" id="4.2.1.33" evidence="1"/>
<dbReference type="EMBL" id="CU928164">
    <property type="protein sequence ID" value="CAR16218.1"/>
    <property type="molecule type" value="Genomic_DNA"/>
</dbReference>
<dbReference type="RefSeq" id="WP_001140652.1">
    <property type="nucleotide sequence ID" value="NC_011750.1"/>
</dbReference>
<dbReference type="RefSeq" id="YP_002406125.1">
    <property type="nucleotide sequence ID" value="NC_011750.1"/>
</dbReference>
<dbReference type="SMR" id="B7NHI0"/>
<dbReference type="STRING" id="585057.ECIAI39_0077"/>
<dbReference type="GeneID" id="75202111"/>
<dbReference type="KEGG" id="ect:ECIAI39_0077"/>
<dbReference type="PATRIC" id="fig|585057.6.peg.84"/>
<dbReference type="HOGENOM" id="CLU_006714_3_4_6"/>
<dbReference type="UniPathway" id="UPA00048">
    <property type="reaction ID" value="UER00071"/>
</dbReference>
<dbReference type="Proteomes" id="UP000000749">
    <property type="component" value="Chromosome"/>
</dbReference>
<dbReference type="GO" id="GO:0003861">
    <property type="term" value="F:3-isopropylmalate dehydratase activity"/>
    <property type="evidence" value="ECO:0007669"/>
    <property type="project" value="UniProtKB-UniRule"/>
</dbReference>
<dbReference type="GO" id="GO:0051539">
    <property type="term" value="F:4 iron, 4 sulfur cluster binding"/>
    <property type="evidence" value="ECO:0007669"/>
    <property type="project" value="UniProtKB-KW"/>
</dbReference>
<dbReference type="GO" id="GO:0046872">
    <property type="term" value="F:metal ion binding"/>
    <property type="evidence" value="ECO:0007669"/>
    <property type="project" value="UniProtKB-KW"/>
</dbReference>
<dbReference type="GO" id="GO:0009098">
    <property type="term" value="P:L-leucine biosynthetic process"/>
    <property type="evidence" value="ECO:0007669"/>
    <property type="project" value="UniProtKB-UniRule"/>
</dbReference>
<dbReference type="CDD" id="cd01583">
    <property type="entry name" value="IPMI"/>
    <property type="match status" value="1"/>
</dbReference>
<dbReference type="FunFam" id="3.30.499.10:FF:000006">
    <property type="entry name" value="3-isopropylmalate dehydratase large subunit"/>
    <property type="match status" value="1"/>
</dbReference>
<dbReference type="FunFam" id="3.30.499.10:FF:000007">
    <property type="entry name" value="3-isopropylmalate dehydratase large subunit"/>
    <property type="match status" value="1"/>
</dbReference>
<dbReference type="Gene3D" id="3.30.499.10">
    <property type="entry name" value="Aconitase, domain 3"/>
    <property type="match status" value="2"/>
</dbReference>
<dbReference type="HAMAP" id="MF_01026">
    <property type="entry name" value="LeuC_type1"/>
    <property type="match status" value="1"/>
</dbReference>
<dbReference type="InterPro" id="IPR004430">
    <property type="entry name" value="3-IsopropMal_deHydase_lsu"/>
</dbReference>
<dbReference type="InterPro" id="IPR015931">
    <property type="entry name" value="Acnase/IPM_dHydase_lsu_aba_1/3"/>
</dbReference>
<dbReference type="InterPro" id="IPR001030">
    <property type="entry name" value="Acoase/IPM_deHydtase_lsu_aba"/>
</dbReference>
<dbReference type="InterPro" id="IPR018136">
    <property type="entry name" value="Aconitase_4Fe-4S_BS"/>
</dbReference>
<dbReference type="InterPro" id="IPR036008">
    <property type="entry name" value="Aconitase_4Fe-4S_dom"/>
</dbReference>
<dbReference type="InterPro" id="IPR050067">
    <property type="entry name" value="IPM_dehydratase_rel_enz"/>
</dbReference>
<dbReference type="InterPro" id="IPR033941">
    <property type="entry name" value="IPMI_cat"/>
</dbReference>
<dbReference type="NCBIfam" id="TIGR00170">
    <property type="entry name" value="leuC"/>
    <property type="match status" value="1"/>
</dbReference>
<dbReference type="NCBIfam" id="NF004016">
    <property type="entry name" value="PRK05478.1"/>
    <property type="match status" value="1"/>
</dbReference>
<dbReference type="NCBIfam" id="NF009116">
    <property type="entry name" value="PRK12466.1"/>
    <property type="match status" value="1"/>
</dbReference>
<dbReference type="PANTHER" id="PTHR43822:SF9">
    <property type="entry name" value="3-ISOPROPYLMALATE DEHYDRATASE"/>
    <property type="match status" value="1"/>
</dbReference>
<dbReference type="PANTHER" id="PTHR43822">
    <property type="entry name" value="HOMOACONITASE, MITOCHONDRIAL-RELATED"/>
    <property type="match status" value="1"/>
</dbReference>
<dbReference type="Pfam" id="PF00330">
    <property type="entry name" value="Aconitase"/>
    <property type="match status" value="1"/>
</dbReference>
<dbReference type="PRINTS" id="PR00415">
    <property type="entry name" value="ACONITASE"/>
</dbReference>
<dbReference type="SUPFAM" id="SSF53732">
    <property type="entry name" value="Aconitase iron-sulfur domain"/>
    <property type="match status" value="1"/>
</dbReference>
<dbReference type="PROSITE" id="PS00450">
    <property type="entry name" value="ACONITASE_1"/>
    <property type="match status" value="1"/>
</dbReference>
<dbReference type="PROSITE" id="PS01244">
    <property type="entry name" value="ACONITASE_2"/>
    <property type="match status" value="1"/>
</dbReference>
<reference key="1">
    <citation type="journal article" date="2009" name="PLoS Genet.">
        <title>Organised genome dynamics in the Escherichia coli species results in highly diverse adaptive paths.</title>
        <authorList>
            <person name="Touchon M."/>
            <person name="Hoede C."/>
            <person name="Tenaillon O."/>
            <person name="Barbe V."/>
            <person name="Baeriswyl S."/>
            <person name="Bidet P."/>
            <person name="Bingen E."/>
            <person name="Bonacorsi S."/>
            <person name="Bouchier C."/>
            <person name="Bouvet O."/>
            <person name="Calteau A."/>
            <person name="Chiapello H."/>
            <person name="Clermont O."/>
            <person name="Cruveiller S."/>
            <person name="Danchin A."/>
            <person name="Diard M."/>
            <person name="Dossat C."/>
            <person name="Karoui M.E."/>
            <person name="Frapy E."/>
            <person name="Garry L."/>
            <person name="Ghigo J.M."/>
            <person name="Gilles A.M."/>
            <person name="Johnson J."/>
            <person name="Le Bouguenec C."/>
            <person name="Lescat M."/>
            <person name="Mangenot S."/>
            <person name="Martinez-Jehanne V."/>
            <person name="Matic I."/>
            <person name="Nassif X."/>
            <person name="Oztas S."/>
            <person name="Petit M.A."/>
            <person name="Pichon C."/>
            <person name="Rouy Z."/>
            <person name="Ruf C.S."/>
            <person name="Schneider D."/>
            <person name="Tourret J."/>
            <person name="Vacherie B."/>
            <person name="Vallenet D."/>
            <person name="Medigue C."/>
            <person name="Rocha E.P.C."/>
            <person name="Denamur E."/>
        </authorList>
    </citation>
    <scope>NUCLEOTIDE SEQUENCE [LARGE SCALE GENOMIC DNA]</scope>
    <source>
        <strain>IAI39 / ExPEC</strain>
    </source>
</reference>
<gene>
    <name evidence="1" type="primary">leuC</name>
    <name type="ordered locus">ECIAI39_0077</name>
</gene>